<organism>
    <name type="scientific">Bacillus anthracis</name>
    <dbReference type="NCBI Taxonomy" id="1392"/>
    <lineage>
        <taxon>Bacteria</taxon>
        <taxon>Bacillati</taxon>
        <taxon>Bacillota</taxon>
        <taxon>Bacilli</taxon>
        <taxon>Bacillales</taxon>
        <taxon>Bacillaceae</taxon>
        <taxon>Bacillus</taxon>
        <taxon>Bacillus cereus group</taxon>
    </lineage>
</organism>
<proteinExistence type="inferred from homology"/>
<gene>
    <name type="primary">spoIISB</name>
    <name type="ordered locus">BA_2492</name>
    <name type="ordered locus">GBAA_2492</name>
    <name type="ordered locus">BAS2315</name>
</gene>
<reference key="1">
    <citation type="journal article" date="2003" name="Nature">
        <title>The genome sequence of Bacillus anthracis Ames and comparison to closely related bacteria.</title>
        <authorList>
            <person name="Read T.D."/>
            <person name="Peterson S.N."/>
            <person name="Tourasse N.J."/>
            <person name="Baillie L.W."/>
            <person name="Paulsen I.T."/>
            <person name="Nelson K.E."/>
            <person name="Tettelin H."/>
            <person name="Fouts D.E."/>
            <person name="Eisen J.A."/>
            <person name="Gill S.R."/>
            <person name="Holtzapple E.K."/>
            <person name="Okstad O.A."/>
            <person name="Helgason E."/>
            <person name="Rilstone J."/>
            <person name="Wu M."/>
            <person name="Kolonay J.F."/>
            <person name="Beanan M.J."/>
            <person name="Dodson R.J."/>
            <person name="Brinkac L.M."/>
            <person name="Gwinn M.L."/>
            <person name="DeBoy R.T."/>
            <person name="Madpu R."/>
            <person name="Daugherty S.C."/>
            <person name="Durkin A.S."/>
            <person name="Haft D.H."/>
            <person name="Nelson W.C."/>
            <person name="Peterson J.D."/>
            <person name="Pop M."/>
            <person name="Khouri H.M."/>
            <person name="Radune D."/>
            <person name="Benton J.L."/>
            <person name="Mahamoud Y."/>
            <person name="Jiang L."/>
            <person name="Hance I.R."/>
            <person name="Weidman J.F."/>
            <person name="Berry K.J."/>
            <person name="Plaut R.D."/>
            <person name="Wolf A.M."/>
            <person name="Watkins K.L."/>
            <person name="Nierman W.C."/>
            <person name="Hazen A."/>
            <person name="Cline R.T."/>
            <person name="Redmond C."/>
            <person name="Thwaite J.E."/>
            <person name="White O."/>
            <person name="Salzberg S.L."/>
            <person name="Thomason B."/>
            <person name="Friedlander A.M."/>
            <person name="Koehler T.M."/>
            <person name="Hanna P.C."/>
            <person name="Kolstoe A.-B."/>
            <person name="Fraser C.M."/>
        </authorList>
    </citation>
    <scope>NUCLEOTIDE SEQUENCE [LARGE SCALE GENOMIC DNA]</scope>
    <source>
        <strain>Ames / isolate Porton</strain>
    </source>
</reference>
<reference key="2">
    <citation type="submission" date="2004-01" db="EMBL/GenBank/DDBJ databases">
        <title>Complete genome sequence of Bacillus anthracis Sterne.</title>
        <authorList>
            <person name="Brettin T.S."/>
            <person name="Bruce D."/>
            <person name="Challacombe J.F."/>
            <person name="Gilna P."/>
            <person name="Han C."/>
            <person name="Hill K."/>
            <person name="Hitchcock P."/>
            <person name="Jackson P."/>
            <person name="Keim P."/>
            <person name="Longmire J."/>
            <person name="Lucas S."/>
            <person name="Okinaka R."/>
            <person name="Richardson P."/>
            <person name="Rubin E."/>
            <person name="Tice H."/>
        </authorList>
    </citation>
    <scope>NUCLEOTIDE SEQUENCE [LARGE SCALE GENOMIC DNA]</scope>
    <source>
        <strain>Sterne</strain>
    </source>
</reference>
<reference key="3">
    <citation type="journal article" date="2009" name="J. Bacteriol.">
        <title>The complete genome sequence of Bacillus anthracis Ames 'Ancestor'.</title>
        <authorList>
            <person name="Ravel J."/>
            <person name="Jiang L."/>
            <person name="Stanley S.T."/>
            <person name="Wilson M.R."/>
            <person name="Decker R.S."/>
            <person name="Read T.D."/>
            <person name="Worsham P."/>
            <person name="Keim P.S."/>
            <person name="Salzberg S.L."/>
            <person name="Fraser-Liggett C.M."/>
            <person name="Rasko D.A."/>
        </authorList>
    </citation>
    <scope>NUCLEOTIDE SEQUENCE [LARGE SCALE GENOMIC DNA]</scope>
    <source>
        <strain>Ames ancestor</strain>
    </source>
</reference>
<comment type="function">
    <text evidence="1">Antitoxin component of a type II toxin-antitoxin (TA) system. Antitoxin that binds toxin SpoIISA and neutralizes its toxic activity (By similarity).</text>
</comment>
<comment type="subunit">
    <text evidence="1">Probably forms a complex with SpoIISA neutralizing its toxic activity.</text>
</comment>
<comment type="similarity">
    <text evidence="2">Belongs to the SpoIISB antitoxin family.</text>
</comment>
<evidence type="ECO:0000250" key="1"/>
<evidence type="ECO:0000305" key="2"/>
<keyword id="KW-1185">Reference proteome</keyword>
<keyword id="KW-0749">Sporulation</keyword>
<keyword id="KW-1277">Toxin-antitoxin system</keyword>
<sequence>MLYNINKRLYLFEKGREEMAEVNVKKSSFFKEKKEVPNTDFSLLKGALIQNLDRLEKFVEAIPYKYIKEGNVKENA</sequence>
<dbReference type="EMBL" id="AE016879">
    <property type="protein sequence ID" value="AAP26353.1"/>
    <property type="molecule type" value="Genomic_DNA"/>
</dbReference>
<dbReference type="EMBL" id="AE017334">
    <property type="protein sequence ID" value="AAT31605.1"/>
    <property type="molecule type" value="Genomic_DNA"/>
</dbReference>
<dbReference type="EMBL" id="AE017225">
    <property type="protein sequence ID" value="AAT54627.1"/>
    <property type="molecule type" value="Genomic_DNA"/>
</dbReference>
<dbReference type="RefSeq" id="NP_844867.3">
    <property type="nucleotide sequence ID" value="NC_003997.3"/>
</dbReference>
<dbReference type="SMR" id="Q81QD4"/>
<dbReference type="STRING" id="261594.GBAA_2492"/>
<dbReference type="DNASU" id="1087327"/>
<dbReference type="KEGG" id="ban:BA_2492"/>
<dbReference type="KEGG" id="bar:GBAA_2492"/>
<dbReference type="KEGG" id="bat:BAS2315"/>
<dbReference type="PATRIC" id="fig|198094.11.peg.2464"/>
<dbReference type="HOGENOM" id="CLU_198764_0_0_9"/>
<dbReference type="Proteomes" id="UP000000427">
    <property type="component" value="Chromosome"/>
</dbReference>
<dbReference type="Proteomes" id="UP000000594">
    <property type="component" value="Chromosome"/>
</dbReference>
<dbReference type="GO" id="GO:0030435">
    <property type="term" value="P:sporulation resulting in formation of a cellular spore"/>
    <property type="evidence" value="ECO:0007669"/>
    <property type="project" value="UniProtKB-KW"/>
</dbReference>
<accession>Q81QD4</accession>
<accession>E9R882</accession>
<accession>E9R883</accession>
<accession>Q6HYL2</accession>
<accession>Q6KSL1</accession>
<name>SP2SB_BACAN</name>
<protein>
    <recommendedName>
        <fullName>Stage II sporulation protein SB</fullName>
    </recommendedName>
    <alternativeName>
        <fullName>Antidote protein SpoIISB</fullName>
    </alternativeName>
    <alternativeName>
        <fullName>Antitoxin SpoIISB</fullName>
    </alternativeName>
</protein>
<feature type="chain" id="PRO_0000415545" description="Stage II sporulation protein SB">
    <location>
        <begin position="1"/>
        <end position="76"/>
    </location>
</feature>